<organism>
    <name type="scientific">Vibrio parahaemolyticus serotype O3:K6 (strain RIMD 2210633)</name>
    <dbReference type="NCBI Taxonomy" id="223926"/>
    <lineage>
        <taxon>Bacteria</taxon>
        <taxon>Pseudomonadati</taxon>
        <taxon>Pseudomonadota</taxon>
        <taxon>Gammaproteobacteria</taxon>
        <taxon>Vibrionales</taxon>
        <taxon>Vibrionaceae</taxon>
        <taxon>Vibrio</taxon>
    </lineage>
</organism>
<gene>
    <name type="primary">alr</name>
    <name type="ordered locus">VP2734</name>
</gene>
<comment type="function">
    <text evidence="1">Catalyzes the interconversion of L-alanine and D-alanine. May also act on other amino acids.</text>
</comment>
<comment type="catalytic activity">
    <reaction evidence="1">
        <text>L-alanine = D-alanine</text>
        <dbReference type="Rhea" id="RHEA:20249"/>
        <dbReference type="ChEBI" id="CHEBI:57416"/>
        <dbReference type="ChEBI" id="CHEBI:57972"/>
        <dbReference type="EC" id="5.1.1.1"/>
    </reaction>
</comment>
<comment type="cofactor">
    <cofactor evidence="1">
        <name>pyridoxal 5'-phosphate</name>
        <dbReference type="ChEBI" id="CHEBI:597326"/>
    </cofactor>
</comment>
<comment type="pathway">
    <text evidence="1">Amino-acid biosynthesis; D-alanine biosynthesis; D-alanine from L-alanine: step 1/1.</text>
</comment>
<comment type="similarity">
    <text evidence="1">Belongs to the alanine racemase family.</text>
</comment>
<evidence type="ECO:0000255" key="1">
    <source>
        <dbReference type="HAMAP-Rule" id="MF_01201"/>
    </source>
</evidence>
<accession>Q87L78</accession>
<feature type="chain" id="PRO_0000114593" description="Alanine racemase">
    <location>
        <begin position="1"/>
        <end position="358"/>
    </location>
</feature>
<feature type="active site" description="Proton acceptor; specific for D-alanine" evidence="1">
    <location>
        <position position="34"/>
    </location>
</feature>
<feature type="active site" description="Proton acceptor; specific for L-alanine" evidence="1">
    <location>
        <position position="254"/>
    </location>
</feature>
<feature type="binding site" evidence="1">
    <location>
        <position position="129"/>
    </location>
    <ligand>
        <name>substrate</name>
    </ligand>
</feature>
<feature type="binding site" evidence="1">
    <location>
        <position position="302"/>
    </location>
    <ligand>
        <name>substrate</name>
    </ligand>
</feature>
<feature type="modified residue" description="N6-(pyridoxal phosphate)lysine" evidence="1">
    <location>
        <position position="34"/>
    </location>
</feature>
<reference key="1">
    <citation type="journal article" date="2003" name="Lancet">
        <title>Genome sequence of Vibrio parahaemolyticus: a pathogenic mechanism distinct from that of V. cholerae.</title>
        <authorList>
            <person name="Makino K."/>
            <person name="Oshima K."/>
            <person name="Kurokawa K."/>
            <person name="Yokoyama K."/>
            <person name="Uda T."/>
            <person name="Tagomori K."/>
            <person name="Iijima Y."/>
            <person name="Najima M."/>
            <person name="Nakano M."/>
            <person name="Yamashita A."/>
            <person name="Kubota Y."/>
            <person name="Kimura S."/>
            <person name="Yasunaga T."/>
            <person name="Honda T."/>
            <person name="Shinagawa H."/>
            <person name="Hattori M."/>
            <person name="Iida T."/>
        </authorList>
    </citation>
    <scope>NUCLEOTIDE SEQUENCE [LARGE SCALE GENOMIC DNA]</scope>
    <source>
        <strain>RIMD 2210633</strain>
    </source>
</reference>
<proteinExistence type="inferred from homology"/>
<sequence length="358" mass="39084">MKAAKACIDLSALQHNLQRVKAQAPESKVMAVVKANGYGHGLRHVAKHANHADAFGVARIEEALQLRACGVVKPILLLEGFYSPGDLPVLVTNNIQTVVHCEEQLIALEQADLETPVVVWLKIDSGMHRLGVRPEQYDEFISRLKTCPNVAKPLRYMSHFGCADELDSSITPQQIELFMSLTSGCQGERSLAASAGLLAWPQSQLEWVRPGIIMYGVSPFSDKTAQDLGYQPVMTLKSHLIAVREVKQGESVGYGGIWTSERDTKVGVIAVGYGDGYPRSAPNGTPVWVNGRTVPIAGRVSMDMLTVDLGPDATDKVSDEAILWGKELPVEEVANHIGTIAYELVTKLTPRVEMEYTK</sequence>
<dbReference type="EC" id="5.1.1.1" evidence="1"/>
<dbReference type="EMBL" id="BA000031">
    <property type="protein sequence ID" value="BAC60997.1"/>
    <property type="molecule type" value="Genomic_DNA"/>
</dbReference>
<dbReference type="RefSeq" id="NP_799113.1">
    <property type="nucleotide sequence ID" value="NC_004603.1"/>
</dbReference>
<dbReference type="RefSeq" id="WP_011106087.1">
    <property type="nucleotide sequence ID" value="NC_004603.1"/>
</dbReference>
<dbReference type="SMR" id="Q87L78"/>
<dbReference type="GeneID" id="65555222"/>
<dbReference type="KEGG" id="vpa:VP2734"/>
<dbReference type="PATRIC" id="fig|223926.6.peg.2631"/>
<dbReference type="eggNOG" id="COG0787">
    <property type="taxonomic scope" value="Bacteria"/>
</dbReference>
<dbReference type="HOGENOM" id="CLU_028393_1_0_6"/>
<dbReference type="UniPathway" id="UPA00042">
    <property type="reaction ID" value="UER00497"/>
</dbReference>
<dbReference type="Proteomes" id="UP000002493">
    <property type="component" value="Chromosome 1"/>
</dbReference>
<dbReference type="GO" id="GO:0005829">
    <property type="term" value="C:cytosol"/>
    <property type="evidence" value="ECO:0007669"/>
    <property type="project" value="TreeGrafter"/>
</dbReference>
<dbReference type="GO" id="GO:0008784">
    <property type="term" value="F:alanine racemase activity"/>
    <property type="evidence" value="ECO:0007669"/>
    <property type="project" value="UniProtKB-UniRule"/>
</dbReference>
<dbReference type="GO" id="GO:0030170">
    <property type="term" value="F:pyridoxal phosphate binding"/>
    <property type="evidence" value="ECO:0007669"/>
    <property type="project" value="UniProtKB-UniRule"/>
</dbReference>
<dbReference type="GO" id="GO:0030632">
    <property type="term" value="P:D-alanine biosynthetic process"/>
    <property type="evidence" value="ECO:0007669"/>
    <property type="project" value="UniProtKB-UniRule"/>
</dbReference>
<dbReference type="CDD" id="cd06827">
    <property type="entry name" value="PLPDE_III_AR_proteobact"/>
    <property type="match status" value="1"/>
</dbReference>
<dbReference type="FunFam" id="2.40.37.10:FF:000002">
    <property type="entry name" value="Alanine racemase"/>
    <property type="match status" value="1"/>
</dbReference>
<dbReference type="FunFam" id="3.20.20.10:FF:000002">
    <property type="entry name" value="Alanine racemase"/>
    <property type="match status" value="1"/>
</dbReference>
<dbReference type="Gene3D" id="3.20.20.10">
    <property type="entry name" value="Alanine racemase"/>
    <property type="match status" value="1"/>
</dbReference>
<dbReference type="Gene3D" id="2.40.37.10">
    <property type="entry name" value="Lyase, Ornithine Decarboxylase, Chain A, domain 1"/>
    <property type="match status" value="1"/>
</dbReference>
<dbReference type="HAMAP" id="MF_01201">
    <property type="entry name" value="Ala_racemase"/>
    <property type="match status" value="1"/>
</dbReference>
<dbReference type="InterPro" id="IPR000821">
    <property type="entry name" value="Ala_racemase"/>
</dbReference>
<dbReference type="InterPro" id="IPR009006">
    <property type="entry name" value="Ala_racemase/Decarboxylase_C"/>
</dbReference>
<dbReference type="InterPro" id="IPR011079">
    <property type="entry name" value="Ala_racemase_C"/>
</dbReference>
<dbReference type="InterPro" id="IPR001608">
    <property type="entry name" value="Ala_racemase_N"/>
</dbReference>
<dbReference type="InterPro" id="IPR020622">
    <property type="entry name" value="Ala_racemase_pyridoxalP-BS"/>
</dbReference>
<dbReference type="InterPro" id="IPR029066">
    <property type="entry name" value="PLP-binding_barrel"/>
</dbReference>
<dbReference type="NCBIfam" id="TIGR00492">
    <property type="entry name" value="alr"/>
    <property type="match status" value="1"/>
</dbReference>
<dbReference type="PANTHER" id="PTHR30511">
    <property type="entry name" value="ALANINE RACEMASE"/>
    <property type="match status" value="1"/>
</dbReference>
<dbReference type="PANTHER" id="PTHR30511:SF4">
    <property type="entry name" value="ALANINE RACEMASE, BIOSYNTHETIC"/>
    <property type="match status" value="1"/>
</dbReference>
<dbReference type="Pfam" id="PF00842">
    <property type="entry name" value="Ala_racemase_C"/>
    <property type="match status" value="1"/>
</dbReference>
<dbReference type="Pfam" id="PF01168">
    <property type="entry name" value="Ala_racemase_N"/>
    <property type="match status" value="1"/>
</dbReference>
<dbReference type="PRINTS" id="PR00992">
    <property type="entry name" value="ALARACEMASE"/>
</dbReference>
<dbReference type="SMART" id="SM01005">
    <property type="entry name" value="Ala_racemase_C"/>
    <property type="match status" value="1"/>
</dbReference>
<dbReference type="SUPFAM" id="SSF50621">
    <property type="entry name" value="Alanine racemase C-terminal domain-like"/>
    <property type="match status" value="1"/>
</dbReference>
<dbReference type="SUPFAM" id="SSF51419">
    <property type="entry name" value="PLP-binding barrel"/>
    <property type="match status" value="1"/>
</dbReference>
<dbReference type="PROSITE" id="PS00395">
    <property type="entry name" value="ALANINE_RACEMASE"/>
    <property type="match status" value="1"/>
</dbReference>
<protein>
    <recommendedName>
        <fullName evidence="1">Alanine racemase</fullName>
        <ecNumber evidence="1">5.1.1.1</ecNumber>
    </recommendedName>
</protein>
<keyword id="KW-0413">Isomerase</keyword>
<keyword id="KW-0663">Pyridoxal phosphate</keyword>
<name>ALR_VIBPA</name>